<feature type="chain" id="PRO_0000100579" description="Phosphoribosylformylglycinamidine synthase subunit PurQ">
    <location>
        <begin position="1"/>
        <end position="222"/>
    </location>
</feature>
<feature type="domain" description="Glutamine amidotransferase type-1" evidence="1">
    <location>
        <begin position="3"/>
        <end position="222"/>
    </location>
</feature>
<feature type="active site" description="Nucleophile" evidence="1">
    <location>
        <position position="86"/>
    </location>
</feature>
<feature type="active site" evidence="1">
    <location>
        <position position="196"/>
    </location>
</feature>
<feature type="active site" evidence="1">
    <location>
        <position position="198"/>
    </location>
</feature>
<comment type="function">
    <text evidence="1">Part of the phosphoribosylformylglycinamidine synthase complex involved in the purines biosynthetic pathway. Catalyzes the ATP-dependent conversion of formylglycinamide ribonucleotide (FGAR) and glutamine to yield formylglycinamidine ribonucleotide (FGAM) and glutamate. The FGAM synthase complex is composed of three subunits. PurQ produces an ammonia molecule by converting glutamine to glutamate. PurL transfers the ammonia molecule to FGAR to form FGAM in an ATP-dependent manner. PurS interacts with PurQ and PurL and is thought to assist in the transfer of the ammonia molecule from PurQ to PurL.</text>
</comment>
<comment type="catalytic activity">
    <reaction evidence="1">
        <text>N(2)-formyl-N(1)-(5-phospho-beta-D-ribosyl)glycinamide + L-glutamine + ATP + H2O = 2-formamido-N(1)-(5-O-phospho-beta-D-ribosyl)acetamidine + L-glutamate + ADP + phosphate + H(+)</text>
        <dbReference type="Rhea" id="RHEA:17129"/>
        <dbReference type="ChEBI" id="CHEBI:15377"/>
        <dbReference type="ChEBI" id="CHEBI:15378"/>
        <dbReference type="ChEBI" id="CHEBI:29985"/>
        <dbReference type="ChEBI" id="CHEBI:30616"/>
        <dbReference type="ChEBI" id="CHEBI:43474"/>
        <dbReference type="ChEBI" id="CHEBI:58359"/>
        <dbReference type="ChEBI" id="CHEBI:147286"/>
        <dbReference type="ChEBI" id="CHEBI:147287"/>
        <dbReference type="ChEBI" id="CHEBI:456216"/>
        <dbReference type="EC" id="6.3.5.3"/>
    </reaction>
</comment>
<comment type="catalytic activity">
    <reaction evidence="1">
        <text>L-glutamine + H2O = L-glutamate + NH4(+)</text>
        <dbReference type="Rhea" id="RHEA:15889"/>
        <dbReference type="ChEBI" id="CHEBI:15377"/>
        <dbReference type="ChEBI" id="CHEBI:28938"/>
        <dbReference type="ChEBI" id="CHEBI:29985"/>
        <dbReference type="ChEBI" id="CHEBI:58359"/>
        <dbReference type="EC" id="3.5.1.2"/>
    </reaction>
</comment>
<comment type="pathway">
    <text evidence="1">Purine metabolism; IMP biosynthesis via de novo pathway; 5-amino-1-(5-phospho-D-ribosyl)imidazole from N(2)-formyl-N(1)-(5-phospho-D-ribosyl)glycinamide: step 1/2.</text>
</comment>
<comment type="subunit">
    <text evidence="1">Part of the FGAM synthase complex composed of 1 PurL, 1 PurQ and 2 PurS subunits.</text>
</comment>
<comment type="subcellular location">
    <subcellularLocation>
        <location evidence="1">Cytoplasm</location>
    </subcellularLocation>
</comment>
<accession>Q98NN0</accession>
<name>PURQ_RHILO</name>
<evidence type="ECO:0000255" key="1">
    <source>
        <dbReference type="HAMAP-Rule" id="MF_00421"/>
    </source>
</evidence>
<gene>
    <name evidence="1" type="primary">purQ</name>
    <name type="ordered locus">mll0065</name>
</gene>
<protein>
    <recommendedName>
        <fullName evidence="1">Phosphoribosylformylglycinamidine synthase subunit PurQ</fullName>
        <shortName evidence="1">FGAM synthase</shortName>
        <ecNumber evidence="1">6.3.5.3</ecNumber>
    </recommendedName>
    <alternativeName>
        <fullName evidence="1">Formylglycinamide ribonucleotide amidotransferase subunit I</fullName>
        <shortName evidence="1">FGAR amidotransferase I</shortName>
        <shortName evidence="1">FGAR-AT I</shortName>
    </alternativeName>
    <alternativeName>
        <fullName evidence="1">Glutaminase PurQ</fullName>
        <ecNumber evidence="1">3.5.1.2</ecNumber>
    </alternativeName>
    <alternativeName>
        <fullName evidence="1">Phosphoribosylformylglycinamidine synthase subunit I</fullName>
    </alternativeName>
</protein>
<dbReference type="EC" id="6.3.5.3" evidence="1"/>
<dbReference type="EC" id="3.5.1.2" evidence="1"/>
<dbReference type="EMBL" id="BA000012">
    <property type="protein sequence ID" value="BAB47731.1"/>
    <property type="molecule type" value="Genomic_DNA"/>
</dbReference>
<dbReference type="RefSeq" id="WP_010909101.1">
    <property type="nucleotide sequence ID" value="NC_002678.2"/>
</dbReference>
<dbReference type="SMR" id="Q98NN0"/>
<dbReference type="KEGG" id="mlo:mll0065"/>
<dbReference type="PATRIC" id="fig|266835.9.peg.52"/>
<dbReference type="eggNOG" id="COG0047">
    <property type="taxonomic scope" value="Bacteria"/>
</dbReference>
<dbReference type="HOGENOM" id="CLU_001031_3_1_5"/>
<dbReference type="UniPathway" id="UPA00074">
    <property type="reaction ID" value="UER00128"/>
</dbReference>
<dbReference type="Proteomes" id="UP000000552">
    <property type="component" value="Chromosome"/>
</dbReference>
<dbReference type="GO" id="GO:0005737">
    <property type="term" value="C:cytoplasm"/>
    <property type="evidence" value="ECO:0007669"/>
    <property type="project" value="UniProtKB-SubCell"/>
</dbReference>
<dbReference type="GO" id="GO:0005524">
    <property type="term" value="F:ATP binding"/>
    <property type="evidence" value="ECO:0007669"/>
    <property type="project" value="UniProtKB-KW"/>
</dbReference>
<dbReference type="GO" id="GO:0004359">
    <property type="term" value="F:glutaminase activity"/>
    <property type="evidence" value="ECO:0007669"/>
    <property type="project" value="UniProtKB-EC"/>
</dbReference>
<dbReference type="GO" id="GO:0004642">
    <property type="term" value="F:phosphoribosylformylglycinamidine synthase activity"/>
    <property type="evidence" value="ECO:0007669"/>
    <property type="project" value="UniProtKB-UniRule"/>
</dbReference>
<dbReference type="GO" id="GO:0006189">
    <property type="term" value="P:'de novo' IMP biosynthetic process"/>
    <property type="evidence" value="ECO:0007669"/>
    <property type="project" value="UniProtKB-UniRule"/>
</dbReference>
<dbReference type="CDD" id="cd01740">
    <property type="entry name" value="GATase1_FGAR_AT"/>
    <property type="match status" value="1"/>
</dbReference>
<dbReference type="Gene3D" id="3.40.50.880">
    <property type="match status" value="1"/>
</dbReference>
<dbReference type="HAMAP" id="MF_00421">
    <property type="entry name" value="PurQ"/>
    <property type="match status" value="1"/>
</dbReference>
<dbReference type="InterPro" id="IPR029062">
    <property type="entry name" value="Class_I_gatase-like"/>
</dbReference>
<dbReference type="InterPro" id="IPR010075">
    <property type="entry name" value="PRibForGlyAmidine_synth_PurQ"/>
</dbReference>
<dbReference type="NCBIfam" id="TIGR01737">
    <property type="entry name" value="FGAM_synth_I"/>
    <property type="match status" value="1"/>
</dbReference>
<dbReference type="NCBIfam" id="NF002957">
    <property type="entry name" value="PRK03619.1"/>
    <property type="match status" value="1"/>
</dbReference>
<dbReference type="PANTHER" id="PTHR47552">
    <property type="entry name" value="PHOSPHORIBOSYLFORMYLGLYCINAMIDINE SYNTHASE SUBUNIT PURQ"/>
    <property type="match status" value="1"/>
</dbReference>
<dbReference type="PANTHER" id="PTHR47552:SF1">
    <property type="entry name" value="PHOSPHORIBOSYLFORMYLGLYCINAMIDINE SYNTHASE SUBUNIT PURQ"/>
    <property type="match status" value="1"/>
</dbReference>
<dbReference type="Pfam" id="PF13507">
    <property type="entry name" value="GATase_5"/>
    <property type="match status" value="1"/>
</dbReference>
<dbReference type="PIRSF" id="PIRSF001586">
    <property type="entry name" value="FGAM_synth_I"/>
    <property type="match status" value="1"/>
</dbReference>
<dbReference type="SMART" id="SM01211">
    <property type="entry name" value="GATase_5"/>
    <property type="match status" value="1"/>
</dbReference>
<dbReference type="SUPFAM" id="SSF52317">
    <property type="entry name" value="Class I glutamine amidotransferase-like"/>
    <property type="match status" value="1"/>
</dbReference>
<dbReference type="PROSITE" id="PS51273">
    <property type="entry name" value="GATASE_TYPE_1"/>
    <property type="match status" value="1"/>
</dbReference>
<sequence>MKSAVVLLPGLNRDRDMIAALTKISGKPPVTVWQTDTEIPDVDLIAIPGGFSFGDYLRCGAIAARMPVMRAVAEKAAKGVTVIGVCNGFQILVEAGLLPGALMRNTSLKFVCRQIKLEITNANTMFTRRYQPGQVIRSPVAHHDGNYFADAETLARLEGEGQVVFRYAEGTNPNGSINDIAGIINEQGNVLGLMPHPENLIEAAHGGSDGRALFEGALGIAA</sequence>
<proteinExistence type="inferred from homology"/>
<keyword id="KW-0067">ATP-binding</keyword>
<keyword id="KW-0963">Cytoplasm</keyword>
<keyword id="KW-0315">Glutamine amidotransferase</keyword>
<keyword id="KW-0378">Hydrolase</keyword>
<keyword id="KW-0436">Ligase</keyword>
<keyword id="KW-0547">Nucleotide-binding</keyword>
<keyword id="KW-0658">Purine biosynthesis</keyword>
<reference key="1">
    <citation type="journal article" date="2000" name="DNA Res.">
        <title>Complete genome structure of the nitrogen-fixing symbiotic bacterium Mesorhizobium loti.</title>
        <authorList>
            <person name="Kaneko T."/>
            <person name="Nakamura Y."/>
            <person name="Sato S."/>
            <person name="Asamizu E."/>
            <person name="Kato T."/>
            <person name="Sasamoto S."/>
            <person name="Watanabe A."/>
            <person name="Idesawa K."/>
            <person name="Ishikawa A."/>
            <person name="Kawashima K."/>
            <person name="Kimura T."/>
            <person name="Kishida Y."/>
            <person name="Kiyokawa C."/>
            <person name="Kohara M."/>
            <person name="Matsumoto M."/>
            <person name="Matsuno A."/>
            <person name="Mochizuki Y."/>
            <person name="Nakayama S."/>
            <person name="Nakazaki N."/>
            <person name="Shimpo S."/>
            <person name="Sugimoto M."/>
            <person name="Takeuchi C."/>
            <person name="Yamada M."/>
            <person name="Tabata S."/>
        </authorList>
    </citation>
    <scope>NUCLEOTIDE SEQUENCE [LARGE SCALE GENOMIC DNA]</scope>
    <source>
        <strain>LMG 29417 / CECT 9101 / MAFF 303099</strain>
    </source>
</reference>
<organism>
    <name type="scientific">Mesorhizobium japonicum (strain LMG 29417 / CECT 9101 / MAFF 303099)</name>
    <name type="common">Mesorhizobium loti (strain MAFF 303099)</name>
    <dbReference type="NCBI Taxonomy" id="266835"/>
    <lineage>
        <taxon>Bacteria</taxon>
        <taxon>Pseudomonadati</taxon>
        <taxon>Pseudomonadota</taxon>
        <taxon>Alphaproteobacteria</taxon>
        <taxon>Hyphomicrobiales</taxon>
        <taxon>Phyllobacteriaceae</taxon>
        <taxon>Mesorhizobium</taxon>
    </lineage>
</organism>